<accession>Q4IB65</accession>
<accession>A0A0E0SN01</accession>
<accession>V6RHW4</accession>
<feature type="chain" id="PRO_0000228045" description="Mitochondrial import inner membrane translocase subunit TIM9">
    <location>
        <begin position="1"/>
        <end position="87"/>
    </location>
</feature>
<feature type="short sequence motif" description="Twin CX3C motif">
    <location>
        <begin position="35"/>
        <end position="59"/>
    </location>
</feature>
<feature type="disulfide bond" evidence="1">
    <location>
        <begin position="35"/>
        <end position="59"/>
    </location>
</feature>
<feature type="disulfide bond" evidence="1">
    <location>
        <begin position="39"/>
        <end position="55"/>
    </location>
</feature>
<gene>
    <name type="primary">TIM9</name>
    <name type="ORF">FGRRES_05543_M</name>
    <name type="ORF">FGSG_05543</name>
</gene>
<organism>
    <name type="scientific">Gibberella zeae (strain ATCC MYA-4620 / CBS 123657 / FGSC 9075 / NRRL 31084 / PH-1)</name>
    <name type="common">Wheat head blight fungus</name>
    <name type="synonym">Fusarium graminearum</name>
    <dbReference type="NCBI Taxonomy" id="229533"/>
    <lineage>
        <taxon>Eukaryota</taxon>
        <taxon>Fungi</taxon>
        <taxon>Dikarya</taxon>
        <taxon>Ascomycota</taxon>
        <taxon>Pezizomycotina</taxon>
        <taxon>Sordariomycetes</taxon>
        <taxon>Hypocreomycetidae</taxon>
        <taxon>Hypocreales</taxon>
        <taxon>Nectriaceae</taxon>
        <taxon>Fusarium</taxon>
    </lineage>
</organism>
<comment type="function">
    <text evidence="1">Mitochondrial intermembrane chaperone that participates in the import and insertion of multi-pass transmembrane proteins into the mitochondrial inner membrane. Also required for the transfer of beta-barrel precursors from the TOM complex to the sorting and assembly machinery (SAM complex) of the outer membrane. Acts as a chaperone-like protein that protects the hydrophobic precursors from aggregation and guide them through the mitochondrial intermembrane space (By similarity).</text>
</comment>
<comment type="subunit">
    <text evidence="1">Heterohexamer; composed of 3 copies of TIM9 and 3 copies of TIM10, named soluble 70 kDa complex. Associates with the TIM22 complex, whose core is composed of TIM22 and TIM54. Interacts with the transmembrane regions of multi-pass transmembrane proteins in transit (By similarity).</text>
</comment>
<comment type="subcellular location">
    <subcellularLocation>
        <location evidence="1">Mitochondrion inner membrane</location>
        <topology evidence="1">Peripheral membrane protein</topology>
        <orientation evidence="1">Intermembrane side</orientation>
    </subcellularLocation>
</comment>
<comment type="domain">
    <text evidence="1">The twin CX3C motif contains 4 conserved Cys residues that form 2 disulfide bonds in the mitochondrial intermembrane space. However, during the transit of TIM9 from cytoplasm into mitochondrion, the Cys residues probably coordinate zinc, thereby preventing folding and allowing its transfer across mitochondrial outer membrane (By similarity).</text>
</comment>
<comment type="similarity">
    <text evidence="2">Belongs to the small Tim family.</text>
</comment>
<proteinExistence type="inferred from homology"/>
<reference key="1">
    <citation type="journal article" date="2007" name="Science">
        <title>The Fusarium graminearum genome reveals a link between localized polymorphism and pathogen specialization.</title>
        <authorList>
            <person name="Cuomo C.A."/>
            <person name="Gueldener U."/>
            <person name="Xu J.-R."/>
            <person name="Trail F."/>
            <person name="Turgeon B.G."/>
            <person name="Di Pietro A."/>
            <person name="Walton J.D."/>
            <person name="Ma L.-J."/>
            <person name="Baker S.E."/>
            <person name="Rep M."/>
            <person name="Adam G."/>
            <person name="Antoniw J."/>
            <person name="Baldwin T."/>
            <person name="Calvo S.E."/>
            <person name="Chang Y.-L."/>
            <person name="DeCaprio D."/>
            <person name="Gale L.R."/>
            <person name="Gnerre S."/>
            <person name="Goswami R.S."/>
            <person name="Hammond-Kosack K."/>
            <person name="Harris L.J."/>
            <person name="Hilburn K."/>
            <person name="Kennell J.C."/>
            <person name="Kroken S."/>
            <person name="Magnuson J.K."/>
            <person name="Mannhaupt G."/>
            <person name="Mauceli E.W."/>
            <person name="Mewes H.-W."/>
            <person name="Mitterbauer R."/>
            <person name="Muehlbauer G."/>
            <person name="Muensterkoetter M."/>
            <person name="Nelson D."/>
            <person name="O'Donnell K."/>
            <person name="Ouellet T."/>
            <person name="Qi W."/>
            <person name="Quesneville H."/>
            <person name="Roncero M.I.G."/>
            <person name="Seong K.-Y."/>
            <person name="Tetko I.V."/>
            <person name="Urban M."/>
            <person name="Waalwijk C."/>
            <person name="Ward T.J."/>
            <person name="Yao J."/>
            <person name="Birren B.W."/>
            <person name="Kistler H.C."/>
        </authorList>
    </citation>
    <scope>NUCLEOTIDE SEQUENCE [LARGE SCALE GENOMIC DNA]</scope>
    <source>
        <strain>ATCC MYA-4620 / CBS 123657 / FGSC 9075 / NRRL 31084 / PH-1</strain>
    </source>
</reference>
<reference key="2">
    <citation type="journal article" date="2010" name="Nature">
        <title>Comparative genomics reveals mobile pathogenicity chromosomes in Fusarium.</title>
        <authorList>
            <person name="Ma L.-J."/>
            <person name="van der Does H.C."/>
            <person name="Borkovich K.A."/>
            <person name="Coleman J.J."/>
            <person name="Daboussi M.-J."/>
            <person name="Di Pietro A."/>
            <person name="Dufresne M."/>
            <person name="Freitag M."/>
            <person name="Grabherr M."/>
            <person name="Henrissat B."/>
            <person name="Houterman P.M."/>
            <person name="Kang S."/>
            <person name="Shim W.-B."/>
            <person name="Woloshuk C."/>
            <person name="Xie X."/>
            <person name="Xu J.-R."/>
            <person name="Antoniw J."/>
            <person name="Baker S.E."/>
            <person name="Bluhm B.H."/>
            <person name="Breakspear A."/>
            <person name="Brown D.W."/>
            <person name="Butchko R.A.E."/>
            <person name="Chapman S."/>
            <person name="Coulson R."/>
            <person name="Coutinho P.M."/>
            <person name="Danchin E.G.J."/>
            <person name="Diener A."/>
            <person name="Gale L.R."/>
            <person name="Gardiner D.M."/>
            <person name="Goff S."/>
            <person name="Hammond-Kosack K.E."/>
            <person name="Hilburn K."/>
            <person name="Hua-Van A."/>
            <person name="Jonkers W."/>
            <person name="Kazan K."/>
            <person name="Kodira C.D."/>
            <person name="Koehrsen M."/>
            <person name="Kumar L."/>
            <person name="Lee Y.-H."/>
            <person name="Li L."/>
            <person name="Manners J.M."/>
            <person name="Miranda-Saavedra D."/>
            <person name="Mukherjee M."/>
            <person name="Park G."/>
            <person name="Park J."/>
            <person name="Park S.-Y."/>
            <person name="Proctor R.H."/>
            <person name="Regev A."/>
            <person name="Ruiz-Roldan M.C."/>
            <person name="Sain D."/>
            <person name="Sakthikumar S."/>
            <person name="Sykes S."/>
            <person name="Schwartz D.C."/>
            <person name="Turgeon B.G."/>
            <person name="Wapinski I."/>
            <person name="Yoder O."/>
            <person name="Young S."/>
            <person name="Zeng Q."/>
            <person name="Zhou S."/>
            <person name="Galagan J."/>
            <person name="Cuomo C.A."/>
            <person name="Kistler H.C."/>
            <person name="Rep M."/>
        </authorList>
    </citation>
    <scope>GENOME REANNOTATION</scope>
    <source>
        <strain>ATCC MYA-4620 / CBS 123657 / FGSC 9075 / NRRL 31084 / PH-1</strain>
    </source>
</reference>
<reference key="3">
    <citation type="journal article" date="2015" name="BMC Genomics">
        <title>The completed genome sequence of the pathogenic ascomycete fungus Fusarium graminearum.</title>
        <authorList>
            <person name="King R."/>
            <person name="Urban M."/>
            <person name="Hammond-Kosack M.C.U."/>
            <person name="Hassani-Pak K."/>
            <person name="Hammond-Kosack K.E."/>
        </authorList>
    </citation>
    <scope>NUCLEOTIDE SEQUENCE [LARGE SCALE GENOMIC DNA]</scope>
    <source>
        <strain>ATCC MYA-4620 / CBS 123657 / FGSC 9075 / NRRL 31084 / PH-1</strain>
    </source>
</reference>
<keyword id="KW-0143">Chaperone</keyword>
<keyword id="KW-1015">Disulfide bond</keyword>
<keyword id="KW-0472">Membrane</keyword>
<keyword id="KW-0479">Metal-binding</keyword>
<keyword id="KW-0496">Mitochondrion</keyword>
<keyword id="KW-0999">Mitochondrion inner membrane</keyword>
<keyword id="KW-0653">Protein transport</keyword>
<keyword id="KW-1185">Reference proteome</keyword>
<keyword id="KW-0811">Translocation</keyword>
<keyword id="KW-0813">Transport</keyword>
<keyword id="KW-0862">Zinc</keyword>
<sequence length="87" mass="10080">MDMLSAAEQRTLEQRMQKRQVKEFMGAFGGLVEHCFMSCVDDFTSKAISNRESGCINRCVQKWMASQQRISDRFQEHNAQLTAQMNK</sequence>
<name>TIM9_GIBZE</name>
<protein>
    <recommendedName>
        <fullName>Mitochondrial import inner membrane translocase subunit TIM9</fullName>
    </recommendedName>
</protein>
<evidence type="ECO:0000250" key="1"/>
<evidence type="ECO:0000305" key="2"/>
<dbReference type="EMBL" id="DS231665">
    <property type="protein sequence ID" value="ESU11515.1"/>
    <property type="molecule type" value="Genomic_DNA"/>
</dbReference>
<dbReference type="EMBL" id="HG970334">
    <property type="protein sequence ID" value="CEF87814.1"/>
    <property type="molecule type" value="Genomic_DNA"/>
</dbReference>
<dbReference type="RefSeq" id="XP_011324091.1">
    <property type="nucleotide sequence ID" value="XM_011325789.1"/>
</dbReference>
<dbReference type="SMR" id="Q4IB65"/>
<dbReference type="FunCoup" id="Q4IB65">
    <property type="interactions" value="921"/>
</dbReference>
<dbReference type="STRING" id="229533.Q4IB65"/>
<dbReference type="GeneID" id="23552722"/>
<dbReference type="KEGG" id="fgr:FGSG_05543"/>
<dbReference type="VEuPathDB" id="FungiDB:FGRAMPH1_01G18167"/>
<dbReference type="eggNOG" id="KOG3479">
    <property type="taxonomic scope" value="Eukaryota"/>
</dbReference>
<dbReference type="HOGENOM" id="CLU_141397_3_0_1"/>
<dbReference type="InParanoid" id="Q4IB65"/>
<dbReference type="OrthoDB" id="23987at110618"/>
<dbReference type="Proteomes" id="UP000070720">
    <property type="component" value="Chromosome 3"/>
</dbReference>
<dbReference type="GO" id="GO:0005743">
    <property type="term" value="C:mitochondrial inner membrane"/>
    <property type="evidence" value="ECO:0007669"/>
    <property type="project" value="UniProtKB-SubCell"/>
</dbReference>
<dbReference type="GO" id="GO:0046872">
    <property type="term" value="F:metal ion binding"/>
    <property type="evidence" value="ECO:0007669"/>
    <property type="project" value="UniProtKB-KW"/>
</dbReference>
<dbReference type="GO" id="GO:0015031">
    <property type="term" value="P:protein transport"/>
    <property type="evidence" value="ECO:0007669"/>
    <property type="project" value="UniProtKB-KW"/>
</dbReference>
<dbReference type="Gene3D" id="1.10.287.810">
    <property type="entry name" value="Mitochondrial import inner membrane translocase subunit tim13 like domains"/>
    <property type="match status" value="1"/>
</dbReference>
<dbReference type="InterPro" id="IPR050673">
    <property type="entry name" value="Mito_inner_translocase_sub"/>
</dbReference>
<dbReference type="InterPro" id="IPR004217">
    <property type="entry name" value="Tim10-like"/>
</dbReference>
<dbReference type="InterPro" id="IPR035427">
    <property type="entry name" value="Tim10-like_dom_sf"/>
</dbReference>
<dbReference type="PANTHER" id="PTHR13172">
    <property type="entry name" value="MITOCHONDRIAL IMPORT INNER MEMBRANE TRANSLOCASE SUBUNIT TIM9B"/>
    <property type="match status" value="1"/>
</dbReference>
<dbReference type="Pfam" id="PF02953">
    <property type="entry name" value="zf-Tim10_DDP"/>
    <property type="match status" value="1"/>
</dbReference>
<dbReference type="SUPFAM" id="SSF144122">
    <property type="entry name" value="Tim10-like"/>
    <property type="match status" value="1"/>
</dbReference>